<protein>
    <recommendedName>
        <fullName evidence="1">Divalent metal cation transporter MntH</fullName>
    </recommendedName>
</protein>
<evidence type="ECO:0000255" key="1">
    <source>
        <dbReference type="HAMAP-Rule" id="MF_00221"/>
    </source>
</evidence>
<accession>C0PZC8</accession>
<name>MNTH_SALPC</name>
<reference key="1">
    <citation type="journal article" date="2009" name="PLoS ONE">
        <title>Salmonella paratyphi C: genetic divergence from Salmonella choleraesuis and pathogenic convergence with Salmonella typhi.</title>
        <authorList>
            <person name="Liu W.-Q."/>
            <person name="Feng Y."/>
            <person name="Wang Y."/>
            <person name="Zou Q.-H."/>
            <person name="Chen F."/>
            <person name="Guo J.-T."/>
            <person name="Peng Y.-H."/>
            <person name="Jin Y."/>
            <person name="Li Y.-G."/>
            <person name="Hu S.-N."/>
            <person name="Johnston R.N."/>
            <person name="Liu G.-R."/>
            <person name="Liu S.-L."/>
        </authorList>
    </citation>
    <scope>NUCLEOTIDE SEQUENCE [LARGE SCALE GENOMIC DNA]</scope>
    <source>
        <strain>RKS4594</strain>
    </source>
</reference>
<organism>
    <name type="scientific">Salmonella paratyphi C (strain RKS4594)</name>
    <dbReference type="NCBI Taxonomy" id="476213"/>
    <lineage>
        <taxon>Bacteria</taxon>
        <taxon>Pseudomonadati</taxon>
        <taxon>Pseudomonadota</taxon>
        <taxon>Gammaproteobacteria</taxon>
        <taxon>Enterobacterales</taxon>
        <taxon>Enterobacteriaceae</taxon>
        <taxon>Salmonella</taxon>
    </lineage>
</organism>
<keyword id="KW-0997">Cell inner membrane</keyword>
<keyword id="KW-1003">Cell membrane</keyword>
<keyword id="KW-0406">Ion transport</keyword>
<keyword id="KW-0472">Membrane</keyword>
<keyword id="KW-0769">Symport</keyword>
<keyword id="KW-0812">Transmembrane</keyword>
<keyword id="KW-1133">Transmembrane helix</keyword>
<keyword id="KW-0813">Transport</keyword>
<feature type="chain" id="PRO_1000124867" description="Divalent metal cation transporter MntH">
    <location>
        <begin position="1"/>
        <end position="413"/>
    </location>
</feature>
<feature type="topological domain" description="Cytoplasmic" evidence="1">
    <location>
        <begin position="1"/>
        <end position="19"/>
    </location>
</feature>
<feature type="transmembrane region" description="Helical" evidence="1">
    <location>
        <begin position="20"/>
        <end position="39"/>
    </location>
</feature>
<feature type="topological domain" description="Periplasmic" evidence="1">
    <location>
        <begin position="40"/>
        <end position="51"/>
    </location>
</feature>
<feature type="transmembrane region" description="Helical" evidence="1">
    <location>
        <begin position="52"/>
        <end position="71"/>
    </location>
</feature>
<feature type="topological domain" description="Cytoplasmic" evidence="1">
    <location>
        <begin position="72"/>
        <end position="95"/>
    </location>
</feature>
<feature type="transmembrane region" description="Helical" evidence="1">
    <location>
        <begin position="96"/>
        <end position="118"/>
    </location>
</feature>
<feature type="topological domain" description="Periplasmic" evidence="1">
    <location>
        <begin position="119"/>
        <end position="125"/>
    </location>
</feature>
<feature type="transmembrane region" description="Helical" evidence="1">
    <location>
        <begin position="126"/>
        <end position="145"/>
    </location>
</feature>
<feature type="topological domain" description="Cytoplasmic" evidence="1">
    <location>
        <begin position="146"/>
        <end position="155"/>
    </location>
</feature>
<feature type="transmembrane region" description="Helical" evidence="1">
    <location>
        <begin position="156"/>
        <end position="175"/>
    </location>
</feature>
<feature type="topological domain" description="Periplasmic" evidence="1">
    <location>
        <begin position="176"/>
        <end position="196"/>
    </location>
</feature>
<feature type="transmembrane region" description="Helical" evidence="1">
    <location>
        <begin position="197"/>
        <end position="220"/>
    </location>
</feature>
<feature type="topological domain" description="Cytoplasmic" evidence="1">
    <location>
        <begin position="221"/>
        <end position="238"/>
    </location>
</feature>
<feature type="transmembrane region" description="Helical" evidence="1">
    <location>
        <begin position="239"/>
        <end position="258"/>
    </location>
</feature>
<feature type="topological domain" description="Periplasmic" evidence="1">
    <location>
        <begin position="259"/>
        <end position="276"/>
    </location>
</feature>
<feature type="transmembrane region" description="Helical" evidence="1">
    <location>
        <begin position="277"/>
        <end position="297"/>
    </location>
</feature>
<feature type="topological domain" description="Cytoplasmic" evidence="1">
    <location>
        <begin position="298"/>
        <end position="327"/>
    </location>
</feature>
<feature type="transmembrane region" description="Helical" evidence="1">
    <location>
        <begin position="328"/>
        <end position="344"/>
    </location>
</feature>
<feature type="topological domain" description="Periplasmic" evidence="1">
    <location>
        <begin position="345"/>
        <end position="350"/>
    </location>
</feature>
<feature type="transmembrane region" description="Helical" evidence="1">
    <location>
        <begin position="351"/>
        <end position="370"/>
    </location>
</feature>
<feature type="topological domain" description="Cytoplasmic" evidence="1">
    <location>
        <begin position="371"/>
        <end position="387"/>
    </location>
</feature>
<feature type="transmembrane region" description="Helical" evidence="1">
    <location>
        <begin position="388"/>
        <end position="406"/>
    </location>
</feature>
<feature type="topological domain" description="Periplasmic" evidence="1">
    <location>
        <begin position="407"/>
        <end position="413"/>
    </location>
</feature>
<dbReference type="EMBL" id="CP000857">
    <property type="protein sequence ID" value="ACN45411.1"/>
    <property type="molecule type" value="Genomic_DNA"/>
</dbReference>
<dbReference type="RefSeq" id="WP_000131735.1">
    <property type="nucleotide sequence ID" value="NC_012125.1"/>
</dbReference>
<dbReference type="SMR" id="C0PZC8"/>
<dbReference type="KEGG" id="sei:SPC_1247"/>
<dbReference type="HOGENOM" id="CLU_020088_2_0_6"/>
<dbReference type="Proteomes" id="UP000001599">
    <property type="component" value="Chromosome"/>
</dbReference>
<dbReference type="GO" id="GO:0005886">
    <property type="term" value="C:plasma membrane"/>
    <property type="evidence" value="ECO:0007669"/>
    <property type="project" value="UniProtKB-SubCell"/>
</dbReference>
<dbReference type="GO" id="GO:0015086">
    <property type="term" value="F:cadmium ion transmembrane transporter activity"/>
    <property type="evidence" value="ECO:0007669"/>
    <property type="project" value="TreeGrafter"/>
</dbReference>
<dbReference type="GO" id="GO:0005384">
    <property type="term" value="F:manganese ion transmembrane transporter activity"/>
    <property type="evidence" value="ECO:0007669"/>
    <property type="project" value="TreeGrafter"/>
</dbReference>
<dbReference type="GO" id="GO:0046872">
    <property type="term" value="F:metal ion binding"/>
    <property type="evidence" value="ECO:0007669"/>
    <property type="project" value="UniProtKB-UniRule"/>
</dbReference>
<dbReference type="GO" id="GO:0015293">
    <property type="term" value="F:symporter activity"/>
    <property type="evidence" value="ECO:0007669"/>
    <property type="project" value="UniProtKB-UniRule"/>
</dbReference>
<dbReference type="GO" id="GO:0034755">
    <property type="term" value="P:iron ion transmembrane transport"/>
    <property type="evidence" value="ECO:0007669"/>
    <property type="project" value="TreeGrafter"/>
</dbReference>
<dbReference type="HAMAP" id="MF_00221">
    <property type="entry name" value="NRAMP"/>
    <property type="match status" value="1"/>
</dbReference>
<dbReference type="InterPro" id="IPR001046">
    <property type="entry name" value="NRAMP_fam"/>
</dbReference>
<dbReference type="NCBIfam" id="TIGR01197">
    <property type="entry name" value="nramp"/>
    <property type="match status" value="1"/>
</dbReference>
<dbReference type="NCBIfam" id="NF037982">
    <property type="entry name" value="Nramp_1"/>
    <property type="match status" value="1"/>
</dbReference>
<dbReference type="NCBIfam" id="NF001923">
    <property type="entry name" value="PRK00701.1"/>
    <property type="match status" value="1"/>
</dbReference>
<dbReference type="PANTHER" id="PTHR11706:SF33">
    <property type="entry name" value="NATURAL RESISTANCE-ASSOCIATED MACROPHAGE PROTEIN 2"/>
    <property type="match status" value="1"/>
</dbReference>
<dbReference type="PANTHER" id="PTHR11706">
    <property type="entry name" value="SOLUTE CARRIER PROTEIN FAMILY 11 MEMBER"/>
    <property type="match status" value="1"/>
</dbReference>
<dbReference type="Pfam" id="PF01566">
    <property type="entry name" value="Nramp"/>
    <property type="match status" value="1"/>
</dbReference>
<dbReference type="PRINTS" id="PR00447">
    <property type="entry name" value="NATRESASSCMP"/>
</dbReference>
<comment type="function">
    <text evidence="1">H(+)-stimulated, divalent metal cation uptake system.</text>
</comment>
<comment type="subcellular location">
    <subcellularLocation>
        <location evidence="1">Cell inner membrane</location>
        <topology evidence="1">Multi-pass membrane protein</topology>
    </subcellularLocation>
</comment>
<comment type="similarity">
    <text evidence="1">Belongs to the NRAMP family.</text>
</comment>
<proteinExistence type="inferred from homology"/>
<sequence length="413" mass="44400">MTDNRVENSSGRAARKLRLALMGPAFIAAIGYIDPGNFATNIQAGASFGYQLLWVVVWANLMAMLIQILSAKLGIATGKNLAEQIRDHYPRPVVWFYWVQAEIIAMATDLAEFIGAAIGFKLILGVSLLQGAVLTGIATFLILMLQRRGQKPLEKVIGGLLLFVAAAYIVELFFSQPDMAQLGKGMVIPALPNPEAVFLAAGVLGATIMPHVIYLHSSLTQHLHGGTRQQRYSATKWDVAIAMTIAGFVNLAMMATAAAAFHFSGHTGIADLDQAYLTLEPLLSHAAATVFGLSLVAAGLSSTVVGTLAGQVVMQGFVRFHIPLWVRRTITMLPSFIVILMGLDPTRILVMSQVLLSFGIALALVPLLIFTSNATLMGELVNTRRVKQVGWIIVVLVVALNIWLLVGTVMGLS</sequence>
<gene>
    <name evidence="1" type="primary">mntH</name>
    <name type="ordered locus">SPC_1247</name>
</gene>